<proteinExistence type="evidence at protein level"/>
<feature type="signal peptide" evidence="1">
    <location>
        <begin position="1"/>
        <end position="19"/>
    </location>
</feature>
<feature type="chain" id="PRO_0000358941" description="S-norcoclaurine synthase">
    <location>
        <begin position="20"/>
        <end position="210"/>
    </location>
</feature>
<feature type="active site" description="Proton donor" evidence="6 8">
    <location>
        <position position="122"/>
    </location>
</feature>
<feature type="binding site" evidence="6 8">
    <location>
        <begin position="108"/>
        <end position="110"/>
    </location>
    <ligand>
        <name>dopamine</name>
        <dbReference type="ChEBI" id="CHEBI:59905"/>
    </ligand>
</feature>
<feature type="binding site" evidence="6 8">
    <location>
        <position position="141"/>
    </location>
    <ligand>
        <name>(4-hydroxyphenyl)acetaldehyde</name>
        <dbReference type="ChEBI" id="CHEBI:15621"/>
    </ligand>
</feature>
<feature type="mutagenesis site" description="Partial loss of activity." evidence="6">
    <original>Y</original>
    <variation>F</variation>
    <location>
        <position position="108"/>
    </location>
</feature>
<feature type="mutagenesis site" description="Partial loss of activity." evidence="6">
    <original>E</original>
    <variation>A</variation>
    <location>
        <position position="110"/>
    </location>
</feature>
<feature type="mutagenesis site" description="Loss of activity." evidence="6">
    <original>K</original>
    <variation>A</variation>
    <location>
        <position position="122"/>
    </location>
</feature>
<feature type="strand" evidence="9">
    <location>
        <begin position="21"/>
        <end position="24"/>
    </location>
</feature>
<feature type="helix" evidence="9">
    <location>
        <begin position="37"/>
        <end position="39"/>
    </location>
</feature>
<feature type="strand" evidence="10">
    <location>
        <begin position="42"/>
        <end position="54"/>
    </location>
</feature>
<feature type="helix" evidence="10">
    <location>
        <begin position="56"/>
        <end position="63"/>
    </location>
</feature>
<feature type="helix" evidence="10">
    <location>
        <begin position="68"/>
        <end position="75"/>
    </location>
</feature>
<feature type="strand" evidence="10">
    <location>
        <begin position="76"/>
        <end position="78"/>
    </location>
</feature>
<feature type="strand" evidence="10">
    <location>
        <begin position="80"/>
        <end position="90"/>
    </location>
</feature>
<feature type="strand" evidence="10">
    <location>
        <begin position="94"/>
        <end position="99"/>
    </location>
</feature>
<feature type="strand" evidence="10">
    <location>
        <begin position="104"/>
        <end position="116"/>
    </location>
</feature>
<feature type="turn" evidence="10">
    <location>
        <begin position="117"/>
        <end position="120"/>
    </location>
</feature>
<feature type="strand" evidence="10">
    <location>
        <begin position="121"/>
        <end position="129"/>
    </location>
</feature>
<feature type="helix" evidence="10">
    <location>
        <begin position="130"/>
        <end position="133"/>
    </location>
</feature>
<feature type="strand" evidence="10">
    <location>
        <begin position="136"/>
        <end position="149"/>
    </location>
</feature>
<feature type="strand" evidence="10">
    <location>
        <begin position="152"/>
        <end position="163"/>
    </location>
</feature>
<feature type="helix" evidence="10">
    <location>
        <begin position="165"/>
        <end position="167"/>
    </location>
</feature>
<feature type="helix" evidence="10">
    <location>
        <begin position="168"/>
        <end position="171"/>
    </location>
</feature>
<feature type="turn" evidence="10">
    <location>
        <begin position="172"/>
        <end position="174"/>
    </location>
</feature>
<feature type="helix" evidence="10">
    <location>
        <begin position="178"/>
        <end position="194"/>
    </location>
</feature>
<accession>Q67A25</accession>
<evidence type="ECO:0000255" key="1"/>
<evidence type="ECO:0000269" key="2">
    <source>
    </source>
</evidence>
<evidence type="ECO:0000269" key="3">
    <source>
    </source>
</evidence>
<evidence type="ECO:0000269" key="4">
    <source>
    </source>
</evidence>
<evidence type="ECO:0000269" key="5">
    <source>
    </source>
</evidence>
<evidence type="ECO:0000269" key="6">
    <source>
    </source>
</evidence>
<evidence type="ECO:0000305" key="7"/>
<evidence type="ECO:0007744" key="8">
    <source>
        <dbReference type="PDB" id="2VQ5"/>
    </source>
</evidence>
<evidence type="ECO:0007829" key="9">
    <source>
        <dbReference type="PDB" id="2VQ5"/>
    </source>
</evidence>
<evidence type="ECO:0007829" key="10">
    <source>
        <dbReference type="PDB" id="6RP3"/>
    </source>
</evidence>
<sequence>MMKMEVVFVFLMLLGTINCQKLILTGRPFLHHQGIINQVSTVTKVIHHELEVAASADDIWTVYSWPGLAKHLPDLLPGAFEKLEIIGDGGVGTILDMTFVPGEFPHEYKEKFILVDNEHRLKKVQMIEGGYLDLGVTYYMDTIHVVPTGKDSCVIKSSTEYHVKPEFVKIVEPLITTGPLAAMADAISKLVLEHKSKSNSDEIEAAIITV</sequence>
<organism>
    <name type="scientific">Thalictrum flavum subsp. glaucum</name>
    <name type="common">Yellow meadow rue</name>
    <dbReference type="NCBI Taxonomy" id="150095"/>
    <lineage>
        <taxon>Eukaryota</taxon>
        <taxon>Viridiplantae</taxon>
        <taxon>Streptophyta</taxon>
        <taxon>Embryophyta</taxon>
        <taxon>Tracheophyta</taxon>
        <taxon>Spermatophyta</taxon>
        <taxon>Magnoliopsida</taxon>
        <taxon>Ranunculales</taxon>
        <taxon>Ranunculaceae</taxon>
        <taxon>Thalictroideae</taxon>
        <taxon>Thalictrum</taxon>
    </lineage>
</organism>
<name>NCS_THLFG</name>
<keyword id="KW-0002">3D-structure</keyword>
<keyword id="KW-0017">Alkaloid metabolism</keyword>
<keyword id="KW-0903">Direct protein sequencing</keyword>
<keyword id="KW-0378">Hydrolase</keyword>
<keyword id="KW-0732">Signal</keyword>
<reference key="1">
    <citation type="journal article" date="2004" name="Plant J.">
        <title>Molecular cloning and characterization of norcoclaurine synthase, an enzyme catalyzing the first committed step in benzylisoquinoline alkaloid biosynthesis.</title>
        <authorList>
            <person name="Samanani N."/>
            <person name="Liscombe D.K."/>
            <person name="Facchini P.J."/>
        </authorList>
    </citation>
    <scope>NUCLEOTIDE SEQUENCE [MRNA]</scope>
    <scope>PROTEIN SEQUENCE OF 112-120 AND 157-169</scope>
    <scope>TISSUE SPECIFICITY</scope>
    <scope>BIOPHYSICOCHEMICAL PROPERTIES</scope>
    <scope>CATALYTIC ACTIVITY</scope>
</reference>
<reference key="2">
    <citation type="journal article" date="2007" name="Biochemistry">
        <title>Mechanistic studies on norcoclaurine synthase of benzylisoquinoline alkaloid biosynthesis: an enzymatic Pictet-Spengler reaction.</title>
        <authorList>
            <person name="Luk L.Y.P."/>
            <person name="Bunn S."/>
            <person name="Liscombe D.K."/>
            <person name="Facchini P.J."/>
            <person name="Tanner M.E."/>
        </authorList>
    </citation>
    <scope>FUNCTION</scope>
    <scope>BIOPHYSICOCHEMICAL PROPERTIES</scope>
    <scope>CATALYTIC ACTIVITY</scope>
</reference>
<reference key="3">
    <citation type="journal article" date="2007" name="Protein Expr. Purif.">
        <title>High-yield expression and purification of isotopically labeled norcoclaurine synthase, a Bet v 1-homologous enzyme, from Thalictrum flavum for NMR studies.</title>
        <authorList>
            <person name="Berkner H."/>
            <person name="Engelhorn J."/>
            <person name="Liscombe D.K."/>
            <person name="Schweimer K."/>
            <person name="Woehrl B.M."/>
            <person name="Facchini P.J."/>
            <person name="Roesch P."/>
            <person name="Matecko I."/>
        </authorList>
    </citation>
    <scope>PROTEIN SEQUENCE OF 30-34</scope>
    <scope>MASS SPECTROMETRY OF 30-210</scope>
    <scope>FUNCTION</scope>
</reference>
<reference key="4">
    <citation type="journal article" date="2008" name="Biochem. J.">
        <title>Conformation, catalytic site, and enzymatic mechanism of the PR10 allergen-related enzyme norcoclaurine synthase.</title>
        <authorList>
            <person name="Berkner H."/>
            <person name="Schweimer K."/>
            <person name="Matecko I."/>
            <person name="Rosch P."/>
        </authorList>
    </citation>
    <scope>FUNCTION</scope>
    <scope>SUBUNIT</scope>
    <scope>3D-STRUCTURE MODELING OF 30-210</scope>
</reference>
<reference key="5">
    <citation type="journal article" date="2008" name="Acta Crystallogr. F">
        <title>Cloning, expression, crystallization and preliminary X-ray data analysis of norcoclaurine synthase from Thalictrum flavum.</title>
        <authorList>
            <person name="Pasquo A."/>
            <person name="Bonamore A."/>
            <person name="Franceschini S."/>
            <person name="Macone A."/>
            <person name="Boffi A."/>
            <person name="Ilari A."/>
        </authorList>
    </citation>
    <scope>X-RAY CRYSTALLOGRAPHY (2.7 ANGSTROMS)</scope>
    <scope>CRYSTALLIZATION</scope>
</reference>
<reference key="6">
    <citation type="journal article" date="2009" name="J. Biol. Chem.">
        <title>Structural basis of enzymatic (S)-norcoclaurine biosynthesis.</title>
        <authorList>
            <person name="Ilari A."/>
            <person name="Franceschini S."/>
            <person name="Bonamore A."/>
            <person name="Arenghi F."/>
            <person name="Botta B."/>
            <person name="Macone A."/>
            <person name="Pasquo A."/>
            <person name="Bellucci L."/>
            <person name="Boffi A."/>
        </authorList>
    </citation>
    <scope>X-RAY CRYSTALLOGRAPHY (2.09 ANGSTROMS) OF 17-210 APOPROTEIN AND IN COMPLEX WITH DOPAMINE AND SUBSTRATE ANALOG P-HYDROXYBENZALDEHYDE</scope>
    <scope>BIOPHYSICOCHEMICAL PROPERTIES</scope>
    <scope>MUTAGENESIS OF TYR-108; GLU-110 AND LYS-122</scope>
    <scope>CATALYTIC ACTIVITY</scope>
</reference>
<comment type="function">
    <text evidence="3 4 5">Involved in the biosynthesis of the common precursor of all benzylisoquinoline alkaloids such as morphine, sanguinarine, codeine or berberine. Condenses dopamine and 4-hydroxyphenylacetaldehyde.</text>
</comment>
<comment type="catalytic activity">
    <reaction evidence="2 3 6">
        <text>(4-hydroxyphenyl)acetaldehyde + dopamine = (S)-norcoclaurine + H2O</text>
        <dbReference type="Rhea" id="RHEA:16173"/>
        <dbReference type="ChEBI" id="CHEBI:15377"/>
        <dbReference type="ChEBI" id="CHEBI:15621"/>
        <dbReference type="ChEBI" id="CHEBI:58253"/>
        <dbReference type="ChEBI" id="CHEBI:59905"/>
        <dbReference type="EC" id="3.5.99.14"/>
    </reaction>
</comment>
<comment type="biophysicochemical properties">
    <kinetics>
        <KM evidence="2 3 6">330 uM for 4-hydroxyphenylacetaldehyde</KM>
        <KM evidence="2 3 6">380 uM for dopamine</KM>
    </kinetics>
    <phDependence>
        <text evidence="2 3 6">Optimum pH is 7.0.</text>
    </phDependence>
    <temperatureDependence>
        <text evidence="2 3 6">Optimum temperature is 40 degrees Celsius.</text>
    </temperatureDependence>
</comment>
<comment type="subunit">
    <text evidence="5 6">Concentration-dependent dimerization, but mainly monomeric at concentrations around 10 uM.</text>
</comment>
<comment type="tissue specificity">
    <text evidence="2">Expressed most abundantly in the rhizomes and to a lesser extent in petioles, roots, leaves and flower buds.</text>
</comment>
<comment type="mass spectrometry"/>
<comment type="miscellaneous">
    <text>May be a member of a small family of three to five members.</text>
</comment>
<comment type="similarity">
    <text evidence="7">Belongs to the BetVI family.</text>
</comment>
<dbReference type="EC" id="3.5.99.14" evidence="2 3 6"/>
<dbReference type="EMBL" id="AY376412">
    <property type="protein sequence ID" value="AAR22502.1"/>
    <property type="molecule type" value="mRNA"/>
</dbReference>
<dbReference type="PDB" id="2VNE">
    <property type="method" value="X-ray"/>
    <property type="resolution" value="2.72 A"/>
    <property type="chains" value="A/B=17-210"/>
</dbReference>
<dbReference type="PDB" id="2VQ5">
    <property type="method" value="X-ray"/>
    <property type="resolution" value="2.09 A"/>
    <property type="chains" value="A/B=17-210"/>
</dbReference>
<dbReference type="PDB" id="5N8Q">
    <property type="method" value="X-ray"/>
    <property type="resolution" value="2.00 A"/>
    <property type="chains" value="A/B/C=34-196"/>
</dbReference>
<dbReference type="PDB" id="5NON">
    <property type="method" value="X-ray"/>
    <property type="resolution" value="1.85 A"/>
    <property type="chains" value="A/B/C=34-196"/>
</dbReference>
<dbReference type="PDB" id="6RP3">
    <property type="method" value="X-ray"/>
    <property type="resolution" value="1.81 A"/>
    <property type="chains" value="A=34-196"/>
</dbReference>
<dbReference type="PDB" id="6Z82">
    <property type="method" value="X-ray"/>
    <property type="resolution" value="2.30 A"/>
    <property type="chains" value="A=34-196"/>
</dbReference>
<dbReference type="PDBsum" id="2VNE"/>
<dbReference type="PDBsum" id="2VQ5"/>
<dbReference type="PDBsum" id="5N8Q"/>
<dbReference type="PDBsum" id="5NON"/>
<dbReference type="PDBsum" id="6RP3"/>
<dbReference type="PDBsum" id="6Z82"/>
<dbReference type="SMR" id="Q67A25"/>
<dbReference type="KEGG" id="ag:AAR22502"/>
<dbReference type="BRENDA" id="4.2.1.78">
    <property type="organism ID" value="6259"/>
</dbReference>
<dbReference type="EvolutionaryTrace" id="Q67A25"/>
<dbReference type="GO" id="GO:0005737">
    <property type="term" value="C:cytoplasm"/>
    <property type="evidence" value="ECO:0007669"/>
    <property type="project" value="TreeGrafter"/>
</dbReference>
<dbReference type="GO" id="GO:0005634">
    <property type="term" value="C:nucleus"/>
    <property type="evidence" value="ECO:0007669"/>
    <property type="project" value="TreeGrafter"/>
</dbReference>
<dbReference type="GO" id="GO:0050474">
    <property type="term" value="F:(S)-norcoclaurine synthase activity"/>
    <property type="evidence" value="ECO:0007669"/>
    <property type="project" value="RHEA"/>
</dbReference>
<dbReference type="GO" id="GO:0010427">
    <property type="term" value="F:abscisic acid binding"/>
    <property type="evidence" value="ECO:0007669"/>
    <property type="project" value="TreeGrafter"/>
</dbReference>
<dbReference type="GO" id="GO:0004864">
    <property type="term" value="F:protein phosphatase inhibitor activity"/>
    <property type="evidence" value="ECO:0007669"/>
    <property type="project" value="TreeGrafter"/>
</dbReference>
<dbReference type="GO" id="GO:0038023">
    <property type="term" value="F:signaling receptor activity"/>
    <property type="evidence" value="ECO:0007669"/>
    <property type="project" value="TreeGrafter"/>
</dbReference>
<dbReference type="GO" id="GO:0009738">
    <property type="term" value="P:abscisic acid-activated signaling pathway"/>
    <property type="evidence" value="ECO:0007669"/>
    <property type="project" value="TreeGrafter"/>
</dbReference>
<dbReference type="GO" id="GO:0009820">
    <property type="term" value="P:alkaloid metabolic process"/>
    <property type="evidence" value="ECO:0007669"/>
    <property type="project" value="UniProtKB-KW"/>
</dbReference>
<dbReference type="GO" id="GO:0006952">
    <property type="term" value="P:defense response"/>
    <property type="evidence" value="ECO:0007669"/>
    <property type="project" value="InterPro"/>
</dbReference>
<dbReference type="CDD" id="cd07816">
    <property type="entry name" value="Bet_v1-like"/>
    <property type="match status" value="1"/>
</dbReference>
<dbReference type="Gene3D" id="3.30.530.20">
    <property type="match status" value="1"/>
</dbReference>
<dbReference type="InterPro" id="IPR000916">
    <property type="entry name" value="Bet_v_I/MLP"/>
</dbReference>
<dbReference type="InterPro" id="IPR050279">
    <property type="entry name" value="Plant_def-hormone_signal"/>
</dbReference>
<dbReference type="InterPro" id="IPR023393">
    <property type="entry name" value="START-like_dom_sf"/>
</dbReference>
<dbReference type="PANTHER" id="PTHR31213:SF19">
    <property type="entry name" value="BET V I_MAJOR LATEX PROTEIN DOMAIN-CONTAINING PROTEIN"/>
    <property type="match status" value="1"/>
</dbReference>
<dbReference type="PANTHER" id="PTHR31213">
    <property type="entry name" value="OS08G0374000 PROTEIN-RELATED"/>
    <property type="match status" value="1"/>
</dbReference>
<dbReference type="Pfam" id="PF00407">
    <property type="entry name" value="Bet_v_1"/>
    <property type="match status" value="1"/>
</dbReference>
<dbReference type="SUPFAM" id="SSF55961">
    <property type="entry name" value="Bet v1-like"/>
    <property type="match status" value="1"/>
</dbReference>
<protein>
    <recommendedName>
        <fullName>S-norcoclaurine synthase</fullName>
        <ecNumber evidence="2 3 6">3.5.99.14</ecNumber>
    </recommendedName>
</protein>